<comment type="similarity">
    <text evidence="1">Belongs to the UPF0102 family.</text>
</comment>
<dbReference type="EMBL" id="AE008691">
    <property type="protein sequence ID" value="AAM24674.1"/>
    <property type="molecule type" value="Genomic_DNA"/>
</dbReference>
<dbReference type="SMR" id="Q8R5S3"/>
<dbReference type="STRING" id="273068.TTE1452"/>
<dbReference type="KEGG" id="tte:TTE1452"/>
<dbReference type="eggNOG" id="COG0792">
    <property type="taxonomic scope" value="Bacteria"/>
</dbReference>
<dbReference type="HOGENOM" id="CLU_115353_2_3_9"/>
<dbReference type="OrthoDB" id="9802516at2"/>
<dbReference type="Proteomes" id="UP000000555">
    <property type="component" value="Chromosome"/>
</dbReference>
<dbReference type="GO" id="GO:0003676">
    <property type="term" value="F:nucleic acid binding"/>
    <property type="evidence" value="ECO:0007669"/>
    <property type="project" value="InterPro"/>
</dbReference>
<dbReference type="CDD" id="cd20736">
    <property type="entry name" value="PoNe_Nuclease"/>
    <property type="match status" value="1"/>
</dbReference>
<dbReference type="Gene3D" id="3.40.1350.10">
    <property type="match status" value="1"/>
</dbReference>
<dbReference type="HAMAP" id="MF_00048">
    <property type="entry name" value="UPF0102"/>
    <property type="match status" value="1"/>
</dbReference>
<dbReference type="InterPro" id="IPR011335">
    <property type="entry name" value="Restrct_endonuc-II-like"/>
</dbReference>
<dbReference type="InterPro" id="IPR011856">
    <property type="entry name" value="tRNA_endonuc-like_dom_sf"/>
</dbReference>
<dbReference type="InterPro" id="IPR003509">
    <property type="entry name" value="UPF0102_YraN-like"/>
</dbReference>
<dbReference type="NCBIfam" id="NF009150">
    <property type="entry name" value="PRK12497.1-3"/>
    <property type="match status" value="1"/>
</dbReference>
<dbReference type="NCBIfam" id="NF009154">
    <property type="entry name" value="PRK12497.3-3"/>
    <property type="match status" value="1"/>
</dbReference>
<dbReference type="NCBIfam" id="TIGR00252">
    <property type="entry name" value="YraN family protein"/>
    <property type="match status" value="1"/>
</dbReference>
<dbReference type="PANTHER" id="PTHR34039">
    <property type="entry name" value="UPF0102 PROTEIN YRAN"/>
    <property type="match status" value="1"/>
</dbReference>
<dbReference type="PANTHER" id="PTHR34039:SF1">
    <property type="entry name" value="UPF0102 PROTEIN YRAN"/>
    <property type="match status" value="1"/>
</dbReference>
<dbReference type="Pfam" id="PF02021">
    <property type="entry name" value="UPF0102"/>
    <property type="match status" value="1"/>
</dbReference>
<dbReference type="SUPFAM" id="SSF52980">
    <property type="entry name" value="Restriction endonuclease-like"/>
    <property type="match status" value="1"/>
</dbReference>
<name>Y1452_CALS4</name>
<reference key="1">
    <citation type="journal article" date="2002" name="Genome Res.">
        <title>A complete sequence of the T. tengcongensis genome.</title>
        <authorList>
            <person name="Bao Q."/>
            <person name="Tian Y."/>
            <person name="Li W."/>
            <person name="Xu Z."/>
            <person name="Xuan Z."/>
            <person name="Hu S."/>
            <person name="Dong W."/>
            <person name="Yang J."/>
            <person name="Chen Y."/>
            <person name="Xue Y."/>
            <person name="Xu Y."/>
            <person name="Lai X."/>
            <person name="Huang L."/>
            <person name="Dong X."/>
            <person name="Ma Y."/>
            <person name="Ling L."/>
            <person name="Tan H."/>
            <person name="Chen R."/>
            <person name="Wang J."/>
            <person name="Yu J."/>
            <person name="Yang H."/>
        </authorList>
    </citation>
    <scope>NUCLEOTIDE SEQUENCE [LARGE SCALE GENOMIC DNA]</scope>
    <source>
        <strain>DSM 15242 / JCM 11007 / NBRC 100824 / MB4</strain>
    </source>
</reference>
<proteinExistence type="inferred from homology"/>
<keyword id="KW-1185">Reference proteome</keyword>
<organism>
    <name type="scientific">Caldanaerobacter subterraneus subsp. tengcongensis (strain DSM 15242 / JCM 11007 / NBRC 100824 / MB4)</name>
    <name type="common">Thermoanaerobacter tengcongensis</name>
    <dbReference type="NCBI Taxonomy" id="273068"/>
    <lineage>
        <taxon>Bacteria</taxon>
        <taxon>Bacillati</taxon>
        <taxon>Bacillota</taxon>
        <taxon>Clostridia</taxon>
        <taxon>Thermoanaerobacterales</taxon>
        <taxon>Thermoanaerobacteraceae</taxon>
        <taxon>Caldanaerobacter</taxon>
    </lineage>
</organism>
<feature type="chain" id="PRO_0000167384" description="UPF0102 protein TTE1452">
    <location>
        <begin position="1"/>
        <end position="122"/>
    </location>
</feature>
<protein>
    <recommendedName>
        <fullName evidence="1">UPF0102 protein TTE1452</fullName>
    </recommendedName>
</protein>
<accession>Q8R5S3</accession>
<gene>
    <name type="ordered locus">TTE1452</name>
</gene>
<evidence type="ECO:0000255" key="1">
    <source>
        <dbReference type="HAMAP-Rule" id="MF_00048"/>
    </source>
</evidence>
<sequence length="122" mass="14039">MKKVNKKTVGSVGEKIAAQYLSKKGYKILEKNFKCKIGEIDLIALYKNQIVFVEVKTRTSVNFGLPSEAVDFHKQQKIVKIAQVYIASSNFKQYQPRFDIIEVYLNPEKLTLEKVNHILNAF</sequence>